<name>YPB2_ECOLX</name>
<organism>
    <name type="scientific">Escherichia coli</name>
    <dbReference type="NCBI Taxonomy" id="562"/>
    <lineage>
        <taxon>Bacteria</taxon>
        <taxon>Pseudomonadati</taxon>
        <taxon>Pseudomonadota</taxon>
        <taxon>Gammaproteobacteria</taxon>
        <taxon>Enterobacterales</taxon>
        <taxon>Enterobacteriaceae</taxon>
        <taxon>Escherichia</taxon>
    </lineage>
</organism>
<proteinExistence type="predicted"/>
<dbReference type="EMBL" id="J01749">
    <property type="status" value="NOT_ANNOTATED_CDS"/>
    <property type="molecule type" value="Genomic_DNA"/>
</dbReference>
<dbReference type="PIR" id="A04479">
    <property type="entry name" value="QQEC2"/>
</dbReference>
<reference key="1">
    <citation type="journal article" date="1979" name="Cold Spring Harb. Symp. Quant. Biol.">
        <title>Complete nucleotide sequence of the Escherichia coli plasmid pBR322.</title>
        <authorList>
            <person name="Sutcliffe J.G."/>
        </authorList>
    </citation>
    <scope>NUCLEOTIDE SEQUENCE [GENOMIC DNA]</scope>
</reference>
<sequence>MKRLLLQNVCDLSNNMNGLRFPCFVKSGNAEVSALHHYVPDLHRRMLLATLWNTYICINEALALTLSDFSLVPPHPYRQLFTLTTFQ</sequence>
<feature type="chain" id="PRO_0000068516" description="Uncharacterized 10.0 kDa protein">
    <location>
        <begin position="1"/>
        <end position="87"/>
    </location>
</feature>
<geneLocation type="plasmid">
    <name>pMB1</name>
</geneLocation>
<accession>P03850</accession>
<keyword id="KW-0614">Plasmid</keyword>
<protein>
    <recommendedName>
        <fullName>Uncharacterized 10.0 kDa protein</fullName>
    </recommendedName>
</protein>